<evidence type="ECO:0000250" key="1"/>
<evidence type="ECO:0000305" key="2"/>
<comment type="function">
    <text evidence="1">Bifunctional enzyme. Involved in de novo dTMP biosynthesis. Key enzyme in folate metabolism. Catalyzes an essential reaction for de novo glycine and purine synthesis, DNA precursor synthesis, and for the conversion of dUMP to dTMP (By similarity).</text>
</comment>
<comment type="catalytic activity">
    <reaction>
        <text>(6S)-5,6,7,8-tetrahydrofolate + NADP(+) = 7,8-dihydrofolate + NADPH + H(+)</text>
        <dbReference type="Rhea" id="RHEA:15009"/>
        <dbReference type="ChEBI" id="CHEBI:15378"/>
        <dbReference type="ChEBI" id="CHEBI:57451"/>
        <dbReference type="ChEBI" id="CHEBI:57453"/>
        <dbReference type="ChEBI" id="CHEBI:57783"/>
        <dbReference type="ChEBI" id="CHEBI:58349"/>
        <dbReference type="EC" id="1.5.1.3"/>
    </reaction>
</comment>
<comment type="catalytic activity">
    <reaction>
        <text>dUMP + (6R)-5,10-methylene-5,6,7,8-tetrahydrofolate = 7,8-dihydrofolate + dTMP</text>
        <dbReference type="Rhea" id="RHEA:12104"/>
        <dbReference type="ChEBI" id="CHEBI:15636"/>
        <dbReference type="ChEBI" id="CHEBI:57451"/>
        <dbReference type="ChEBI" id="CHEBI:63528"/>
        <dbReference type="ChEBI" id="CHEBI:246422"/>
        <dbReference type="EC" id="2.1.1.45"/>
    </reaction>
</comment>
<comment type="pathway">
    <text>Cofactor biosynthesis; tetrahydrofolate biosynthesis; 5,6,7,8-tetrahydrofolate from 7,8-dihydrofolate: step 1/1.</text>
</comment>
<comment type="similarity">
    <text evidence="2">In the N-terminal section; belongs to the dihydrofolate reductase family.</text>
</comment>
<comment type="similarity">
    <text evidence="2">In the C-terminal section; belongs to the thymidylate synthase family.</text>
</comment>
<organism>
    <name type="scientific">Leishmania major</name>
    <dbReference type="NCBI Taxonomy" id="5664"/>
    <lineage>
        <taxon>Eukaryota</taxon>
        <taxon>Discoba</taxon>
        <taxon>Euglenozoa</taxon>
        <taxon>Kinetoplastea</taxon>
        <taxon>Metakinetoplastina</taxon>
        <taxon>Trypanosomatida</taxon>
        <taxon>Trypanosomatidae</taxon>
        <taxon>Leishmaniinae</taxon>
        <taxon>Leishmania</taxon>
    </lineage>
</organism>
<keyword id="KW-0903">Direct protein sequencing</keyword>
<keyword id="KW-0489">Methyltransferase</keyword>
<keyword id="KW-0511">Multifunctional enzyme</keyword>
<keyword id="KW-0521">NADP</keyword>
<keyword id="KW-0545">Nucleotide biosynthesis</keyword>
<keyword id="KW-0554">One-carbon metabolism</keyword>
<keyword id="KW-0560">Oxidoreductase</keyword>
<keyword id="KW-1185">Reference proteome</keyword>
<keyword id="KW-0808">Transferase</keyword>
<feature type="chain" id="PRO_0000186345" description="Bifunctional dihydrofolate reductase-thymidylate synthase">
    <location>
        <begin position="1"/>
        <end position="520"/>
    </location>
</feature>
<feature type="domain" description="DHFR">
    <location>
        <begin position="26"/>
        <end position="229"/>
    </location>
</feature>
<feature type="region of interest" description="Thymidylate synthase">
    <location>
        <begin position="234"/>
        <end position="520"/>
    </location>
</feature>
<feature type="active site" evidence="1">
    <location>
        <position position="400"/>
    </location>
</feature>
<feature type="binding site" evidence="1">
    <location>
        <position position="30"/>
    </location>
    <ligand>
        <name>substrate</name>
    </ligand>
</feature>
<feature type="binding site" evidence="1">
    <location>
        <position position="32"/>
    </location>
    <ligand>
        <name>NADP(+)</name>
        <dbReference type="ChEBI" id="CHEBI:58349"/>
    </ligand>
</feature>
<feature type="binding site" evidence="1">
    <location>
        <begin position="38"/>
        <end position="44"/>
    </location>
    <ligand>
        <name>NADP(+)</name>
        <dbReference type="ChEBI" id="CHEBI:58349"/>
    </ligand>
</feature>
<feature type="binding site" evidence="1">
    <location>
        <position position="52"/>
    </location>
    <ligand>
        <name>substrate</name>
    </ligand>
</feature>
<feature type="binding site" evidence="1">
    <location>
        <begin position="81"/>
        <end position="83"/>
    </location>
    <ligand>
        <name>NADP(+)</name>
        <dbReference type="ChEBI" id="CHEBI:58349"/>
    </ligand>
</feature>
<feature type="binding site" evidence="1">
    <location>
        <begin position="102"/>
        <end position="105"/>
    </location>
    <ligand>
        <name>NADP(+)</name>
        <dbReference type="ChEBI" id="CHEBI:58349"/>
    </ligand>
</feature>
<feature type="binding site" evidence="1">
    <location>
        <begin position="157"/>
        <end position="164"/>
    </location>
    <ligand>
        <name>NADP(+)</name>
        <dbReference type="ChEBI" id="CHEBI:58349"/>
    </ligand>
</feature>
<feature type="binding site" evidence="1">
    <location>
        <position position="162"/>
    </location>
    <ligand>
        <name>substrate</name>
    </ligand>
</feature>
<feature type="binding site" evidence="1">
    <location>
        <position position="180"/>
    </location>
    <ligand>
        <name>substrate</name>
    </ligand>
</feature>
<feature type="binding site" evidence="1">
    <location>
        <position position="254"/>
    </location>
    <ligand>
        <name>dUMP</name>
        <dbReference type="ChEBI" id="CHEBI:246422"/>
    </ligand>
</feature>
<feature type="binding site" evidence="1">
    <location>
        <position position="401"/>
    </location>
    <ligand>
        <name>dUMP</name>
        <dbReference type="ChEBI" id="CHEBI:246422"/>
    </ligand>
</feature>
<feature type="binding site" evidence="1">
    <location>
        <begin position="421"/>
        <end position="425"/>
    </location>
    <ligand>
        <name>dUMP</name>
        <dbReference type="ChEBI" id="CHEBI:246422"/>
    </ligand>
</feature>
<feature type="binding site" evidence="1">
    <location>
        <position position="433"/>
    </location>
    <ligand>
        <name>dUMP</name>
        <dbReference type="ChEBI" id="CHEBI:246422"/>
    </ligand>
</feature>
<feature type="binding site" evidence="1">
    <location>
        <begin position="463"/>
        <end position="465"/>
    </location>
    <ligand>
        <name>dUMP</name>
        <dbReference type="ChEBI" id="CHEBI:246422"/>
    </ligand>
</feature>
<feature type="sequence conflict" description="In Ref. 2; AAA29272." evidence="2" ref="2">
    <original>S</original>
    <variation>C</variation>
    <location>
        <position position="28"/>
    </location>
</feature>
<feature type="sequence conflict" description="In Ref. 2; AAA29272." evidence="2" ref="2">
    <original>V</original>
    <variation>S</variation>
    <location>
        <position position="49"/>
    </location>
</feature>
<feature type="sequence conflict" description="In Ref. 2; AAA29272." evidence="2" ref="2">
    <original>KKRNA</original>
    <variation>EEAQR</variation>
    <location>
        <begin position="72"/>
        <end position="76"/>
    </location>
</feature>
<feature type="sequence conflict" description="In Ref. 2; AAA29272." evidence="2" ref="2">
    <original>QDV</original>
    <variation>RML</variation>
    <location>
        <begin position="125"/>
        <end position="127"/>
    </location>
</feature>
<feature type="sequence conflict" description="In Ref. 2; AAA29272." evidence="2" ref="2">
    <original>A</original>
    <variation>T</variation>
    <location>
        <position position="307"/>
    </location>
</feature>
<feature type="sequence conflict" description="In Ref. 2; AAA29272." evidence="2" ref="2">
    <original>L</original>
    <variation>V</variation>
    <location>
        <position position="397"/>
    </location>
</feature>
<name>DRTS_LEIMA</name>
<proteinExistence type="evidence at protein level"/>
<dbReference type="EC" id="1.5.1.3"/>
<dbReference type="EC" id="2.1.1.45"/>
<dbReference type="EMBL" id="M12734">
    <property type="protein sequence ID" value="AAA29232.1"/>
    <property type="molecule type" value="Genomic_DNA"/>
</dbReference>
<dbReference type="EMBL" id="M14330">
    <property type="protein sequence ID" value="AAA29272.1"/>
    <property type="molecule type" value="Genomic_DNA"/>
</dbReference>
<dbReference type="EMBL" id="X51733">
    <property type="protein sequence ID" value="CAA36019.1"/>
    <property type="molecule type" value="Genomic_DNA"/>
</dbReference>
<dbReference type="EMBL" id="FR796402">
    <property type="protein sequence ID" value="CAJ02132.1"/>
    <property type="molecule type" value="Genomic_DNA"/>
</dbReference>
<dbReference type="PIR" id="A23403">
    <property type="entry name" value="RDLNTS"/>
</dbReference>
<dbReference type="SMR" id="P07382"/>
<dbReference type="STRING" id="5664.P07382"/>
<dbReference type="BindingDB" id="P07382"/>
<dbReference type="ChEMBL" id="CHEMBL4614"/>
<dbReference type="DrugCentral" id="P07382"/>
<dbReference type="EnsemblProtists" id="CAJ02132">
    <property type="protein sequence ID" value="CAJ02132"/>
    <property type="gene ID" value="LMJF_06_0860"/>
</dbReference>
<dbReference type="KEGG" id="lma:LMJF_06_0860"/>
<dbReference type="VEuPathDB" id="TriTrypDB:LmjF.06.0860"/>
<dbReference type="VEuPathDB" id="TriTrypDB:LMJFC_060015000"/>
<dbReference type="VEuPathDB" id="TriTrypDB:LMJSD75_060015000"/>
<dbReference type="eggNOG" id="KOG0673">
    <property type="taxonomic scope" value="Eukaryota"/>
</dbReference>
<dbReference type="eggNOG" id="KOG1324">
    <property type="taxonomic scope" value="Eukaryota"/>
</dbReference>
<dbReference type="InParanoid" id="P07382"/>
<dbReference type="OMA" id="ENQYLDM"/>
<dbReference type="SABIO-RK" id="P07382"/>
<dbReference type="UniPathway" id="UPA00077">
    <property type="reaction ID" value="UER00158"/>
</dbReference>
<dbReference type="PRO" id="PR:P07382"/>
<dbReference type="Proteomes" id="UP000000542">
    <property type="component" value="Chromosome 6"/>
</dbReference>
<dbReference type="GO" id="GO:0005737">
    <property type="term" value="C:cytoplasm"/>
    <property type="evidence" value="ECO:0000266"/>
    <property type="project" value="GeneDB"/>
</dbReference>
<dbReference type="GO" id="GO:0005829">
    <property type="term" value="C:cytosol"/>
    <property type="evidence" value="ECO:0000318"/>
    <property type="project" value="GO_Central"/>
</dbReference>
<dbReference type="GO" id="GO:0005739">
    <property type="term" value="C:mitochondrion"/>
    <property type="evidence" value="ECO:0000318"/>
    <property type="project" value="GO_Central"/>
</dbReference>
<dbReference type="GO" id="GO:0004146">
    <property type="term" value="F:dihydrofolate reductase activity"/>
    <property type="evidence" value="ECO:0007669"/>
    <property type="project" value="UniProtKB-EC"/>
</dbReference>
<dbReference type="GO" id="GO:0004799">
    <property type="term" value="F:thymidylate synthase activity"/>
    <property type="evidence" value="ECO:0000318"/>
    <property type="project" value="GO_Central"/>
</dbReference>
<dbReference type="GO" id="GO:0006231">
    <property type="term" value="P:dTMP biosynthetic process"/>
    <property type="evidence" value="ECO:0000318"/>
    <property type="project" value="GO_Central"/>
</dbReference>
<dbReference type="GO" id="GO:0032259">
    <property type="term" value="P:methylation"/>
    <property type="evidence" value="ECO:0007669"/>
    <property type="project" value="UniProtKB-KW"/>
</dbReference>
<dbReference type="GO" id="GO:0006730">
    <property type="term" value="P:one-carbon metabolic process"/>
    <property type="evidence" value="ECO:0007669"/>
    <property type="project" value="UniProtKB-KW"/>
</dbReference>
<dbReference type="GO" id="GO:0046654">
    <property type="term" value="P:tetrahydrofolate biosynthetic process"/>
    <property type="evidence" value="ECO:0007669"/>
    <property type="project" value="UniProtKB-UniPathway"/>
</dbReference>
<dbReference type="CDD" id="cd00209">
    <property type="entry name" value="DHFR"/>
    <property type="match status" value="1"/>
</dbReference>
<dbReference type="CDD" id="cd00351">
    <property type="entry name" value="TS_Pyrimidine_HMase"/>
    <property type="match status" value="1"/>
</dbReference>
<dbReference type="FunFam" id="3.30.572.10:FF:000011">
    <property type="entry name" value="Bifunctional dihydrofolate reductase-thymidylate synthase"/>
    <property type="match status" value="1"/>
</dbReference>
<dbReference type="FunFam" id="3.40.430.10:FF:000017">
    <property type="entry name" value="Bifunctional dihydrofolate reductase-thymidylate synthase"/>
    <property type="match status" value="1"/>
</dbReference>
<dbReference type="Gene3D" id="3.40.430.10">
    <property type="entry name" value="Dihydrofolate Reductase, subunit A"/>
    <property type="match status" value="1"/>
</dbReference>
<dbReference type="Gene3D" id="3.30.572.10">
    <property type="entry name" value="Thymidylate synthase/dCMP hydroxymethylase domain"/>
    <property type="match status" value="1"/>
</dbReference>
<dbReference type="HAMAP" id="MF_00008">
    <property type="entry name" value="Thymidy_synth_bact"/>
    <property type="match status" value="1"/>
</dbReference>
<dbReference type="InterPro" id="IPR024072">
    <property type="entry name" value="DHFR-like_dom_sf"/>
</dbReference>
<dbReference type="InterPro" id="IPR012262">
    <property type="entry name" value="DHFR-TS"/>
</dbReference>
<dbReference type="InterPro" id="IPR017925">
    <property type="entry name" value="DHFR_CS"/>
</dbReference>
<dbReference type="InterPro" id="IPR001796">
    <property type="entry name" value="DHFR_dom"/>
</dbReference>
<dbReference type="InterPro" id="IPR045097">
    <property type="entry name" value="Thymidate_synth/dCMP_Mease"/>
</dbReference>
<dbReference type="InterPro" id="IPR023451">
    <property type="entry name" value="Thymidate_synth/dCMP_Mease_dom"/>
</dbReference>
<dbReference type="InterPro" id="IPR036926">
    <property type="entry name" value="Thymidate_synth/dCMP_Mease_sf"/>
</dbReference>
<dbReference type="InterPro" id="IPR000398">
    <property type="entry name" value="Thymidylate_synthase"/>
</dbReference>
<dbReference type="InterPro" id="IPR020940">
    <property type="entry name" value="Thymidylate_synthase_AS"/>
</dbReference>
<dbReference type="NCBIfam" id="NF002497">
    <property type="entry name" value="PRK01827.1-3"/>
    <property type="match status" value="1"/>
</dbReference>
<dbReference type="NCBIfam" id="TIGR03284">
    <property type="entry name" value="thym_sym"/>
    <property type="match status" value="1"/>
</dbReference>
<dbReference type="PANTHER" id="PTHR11548:SF2">
    <property type="entry name" value="THYMIDYLATE SYNTHASE"/>
    <property type="match status" value="1"/>
</dbReference>
<dbReference type="PANTHER" id="PTHR11548">
    <property type="entry name" value="THYMIDYLATE SYNTHASE 1"/>
    <property type="match status" value="1"/>
</dbReference>
<dbReference type="Pfam" id="PF00186">
    <property type="entry name" value="DHFR_1"/>
    <property type="match status" value="1"/>
</dbReference>
<dbReference type="Pfam" id="PF00303">
    <property type="entry name" value="Thymidylat_synt"/>
    <property type="match status" value="1"/>
</dbReference>
<dbReference type="PIRSF" id="PIRSF000389">
    <property type="entry name" value="DHFR-TS"/>
    <property type="match status" value="1"/>
</dbReference>
<dbReference type="PRINTS" id="PR00108">
    <property type="entry name" value="THYMDSNTHASE"/>
</dbReference>
<dbReference type="SUPFAM" id="SSF53597">
    <property type="entry name" value="Dihydrofolate reductase-like"/>
    <property type="match status" value="1"/>
</dbReference>
<dbReference type="SUPFAM" id="SSF55831">
    <property type="entry name" value="Thymidylate synthase/dCMP hydroxymethylase"/>
    <property type="match status" value="1"/>
</dbReference>
<dbReference type="PROSITE" id="PS00075">
    <property type="entry name" value="DHFR_1"/>
    <property type="match status" value="1"/>
</dbReference>
<dbReference type="PROSITE" id="PS51330">
    <property type="entry name" value="DHFR_2"/>
    <property type="match status" value="1"/>
</dbReference>
<dbReference type="PROSITE" id="PS00091">
    <property type="entry name" value="THYMIDYLATE_SYNTHASE"/>
    <property type="match status" value="1"/>
</dbReference>
<reference key="1">
    <citation type="journal article" date="1986" name="Proc. Natl. Acad. Sci. U.S.A.">
        <title>Primary structure of the gene encoding the bifunctional dihydrofolate reductase-thymidylate synthase of Leishmania major.</title>
        <authorList>
            <person name="Beverley S.M."/>
            <person name="Ellenberger T.E."/>
            <person name="Cordingley J.S."/>
        </authorList>
    </citation>
    <scope>NUCLEOTIDE SEQUENCE [GENOMIC DNA]</scope>
</reference>
<reference key="2">
    <citation type="journal article" date="1986" name="Proc. Natl. Acad. Sci. U.S.A.">
        <title>Bifunctional thymidylate synthase-dihydrofolate reductase from Leishmania tropica: sequence homology with the corresponding monofunctional proteins.</title>
        <authorList>
            <person name="Grumont R."/>
            <person name="Washtien W.L."/>
            <person name="Caput D."/>
            <person name="Santi D.V."/>
        </authorList>
    </citation>
    <scope>NUCLEOTIDE SEQUENCE [GENOMIC DNA]</scope>
</reference>
<reference key="3">
    <citation type="submission" date="1990-02" db="EMBL/GenBank/DDBJ databases">
        <authorList>
            <person name="Kapler G.M."/>
            <person name="Zhang K."/>
            <person name="Beverley S."/>
        </authorList>
    </citation>
    <scope>NUCLEOTIDE SEQUENCE [GENOMIC DNA]</scope>
    <source>
        <strain>LT25Z</strain>
    </source>
</reference>
<reference key="4">
    <citation type="journal article" date="2005" name="Science">
        <title>The genome of the kinetoplastid parasite, Leishmania major.</title>
        <authorList>
            <person name="Ivens A.C."/>
            <person name="Peacock C.S."/>
            <person name="Worthey E.A."/>
            <person name="Murphy L."/>
            <person name="Aggarwal G."/>
            <person name="Berriman M."/>
            <person name="Sisk E."/>
            <person name="Rajandream M.A."/>
            <person name="Adlem E."/>
            <person name="Aert R."/>
            <person name="Anupama A."/>
            <person name="Apostolou Z."/>
            <person name="Attipoe P."/>
            <person name="Bason N."/>
            <person name="Bauser C."/>
            <person name="Beck A."/>
            <person name="Beverley S.M."/>
            <person name="Bianchettin G."/>
            <person name="Borzym K."/>
            <person name="Bothe G."/>
            <person name="Bruschi C.V."/>
            <person name="Collins M."/>
            <person name="Cadag E."/>
            <person name="Ciarloni L."/>
            <person name="Clayton C."/>
            <person name="Coulson R.M.R."/>
            <person name="Cronin A."/>
            <person name="Cruz A.K."/>
            <person name="Davies R.M."/>
            <person name="De Gaudenzi J."/>
            <person name="Dobson D.E."/>
            <person name="Duesterhoeft A."/>
            <person name="Fazelina G."/>
            <person name="Fosker N."/>
            <person name="Frasch A.C."/>
            <person name="Fraser A."/>
            <person name="Fuchs M."/>
            <person name="Gabel C."/>
            <person name="Goble A."/>
            <person name="Goffeau A."/>
            <person name="Harris D."/>
            <person name="Hertz-Fowler C."/>
            <person name="Hilbert H."/>
            <person name="Horn D."/>
            <person name="Huang Y."/>
            <person name="Klages S."/>
            <person name="Knights A."/>
            <person name="Kube M."/>
            <person name="Larke N."/>
            <person name="Litvin L."/>
            <person name="Lord A."/>
            <person name="Louie T."/>
            <person name="Marra M."/>
            <person name="Masuy D."/>
            <person name="Matthews K."/>
            <person name="Michaeli S."/>
            <person name="Mottram J.C."/>
            <person name="Mueller-Auer S."/>
            <person name="Munden H."/>
            <person name="Nelson S."/>
            <person name="Norbertczak H."/>
            <person name="Oliver K."/>
            <person name="O'neil S."/>
            <person name="Pentony M."/>
            <person name="Pohl T.M."/>
            <person name="Price C."/>
            <person name="Purnelle B."/>
            <person name="Quail M.A."/>
            <person name="Rabbinowitsch E."/>
            <person name="Reinhardt R."/>
            <person name="Rieger M."/>
            <person name="Rinta J."/>
            <person name="Robben J."/>
            <person name="Robertson L."/>
            <person name="Ruiz J.C."/>
            <person name="Rutter S."/>
            <person name="Saunders D."/>
            <person name="Schaefer M."/>
            <person name="Schein J."/>
            <person name="Schwartz D.C."/>
            <person name="Seeger K."/>
            <person name="Seyler A."/>
            <person name="Sharp S."/>
            <person name="Shin H."/>
            <person name="Sivam D."/>
            <person name="Squares R."/>
            <person name="Squares S."/>
            <person name="Tosato V."/>
            <person name="Vogt C."/>
            <person name="Volckaert G."/>
            <person name="Wambutt R."/>
            <person name="Warren T."/>
            <person name="Wedler H."/>
            <person name="Woodward J."/>
            <person name="Zhou S."/>
            <person name="Zimmermann W."/>
            <person name="Smith D.F."/>
            <person name="Blackwell J.M."/>
            <person name="Stuart K.D."/>
            <person name="Barrell B.G."/>
            <person name="Myler P.J."/>
        </authorList>
    </citation>
    <scope>NUCLEOTIDE SEQUENCE [LARGE SCALE GENOMIC DNA]</scope>
    <source>
        <strain>MHOM/IL/81/Friedlin</strain>
    </source>
</reference>
<reference key="5">
    <citation type="journal article" date="1985" name="Proc. Natl. Acad. Sci. U.S.A.">
        <title>Limited proteolysis of the bifunctional thymidylate synthase-dihydrofolate reductase from Leishmania tropica.</title>
        <authorList>
            <person name="Garvey E.P."/>
            <person name="Santi D.V."/>
        </authorList>
    </citation>
    <scope>PROTEIN SEQUENCE OF 334-361</scope>
</reference>
<sequence length="520" mass="58689">MSRAAARFKIPMPETKADFAFPSLRAFSIVVALDMQHGIGDGESIPWRVPEDMTFFKNQTTLLRNKKPPTEKKRNAVVMGRKTWESVPVKFRPLKGRLNIVLSSKATVEELLAPLPEGQRAAAAQDVVVVNGGLAEALRLLARPLYCSSIETAYCVGGAQVYADAMLSPCIEKLQEVYLTRIYATAPACTRFFPFPPENAATAWDLASSQGRRKSEAEGLEFEICKYVPRNHEERQYLELIDRIMKTGIVKEDRTGVGTISLFGAQMRFSLRDNRLPLLTTKRVFWRGVCEELLWFLRGETSAQLLADKDIHIWDGNGSREFLDSRGLTENKEMDLGPVYGFQWRHFGADYKGFEANYDGEGVDQIKLIVETIKTNPNDRRLLVTAWNPCALQKMALPPCHLLAQFYVNTDTSELSCMLYQRSCDMGLGVPFNIASYALLTILIAKATGLRPGELVHTLGDAHVYRNHVDALKAQLERVPHAFPTLIFKEERQYLEDYELTDMEVIDYVPHPAIKMEMAV</sequence>
<protein>
    <recommendedName>
        <fullName>Bifunctional dihydrofolate reductase-thymidylate synthase</fullName>
        <shortName>DHFR-TS</shortName>
    </recommendedName>
    <domain>
        <recommendedName>
            <fullName>Dihydrofolate reductase</fullName>
            <ecNumber>1.5.1.3</ecNumber>
        </recommendedName>
    </domain>
    <domain>
        <recommendedName>
            <fullName>Thymidylate synthase</fullName>
            <ecNumber>2.1.1.45</ecNumber>
        </recommendedName>
    </domain>
</protein>
<gene>
    <name type="ORF">LmjF06.0860</name>
    <name type="ORF">LmjF_06_0860</name>
</gene>
<accession>P07382</accession>
<accession>Q4QIZ1</accession>